<feature type="chain" id="PRO_0000372287" description="Putative antiporter subunit mnhA2">
    <location>
        <begin position="1"/>
        <end position="800"/>
    </location>
</feature>
<feature type="transmembrane region" description="Helical" evidence="2">
    <location>
        <begin position="1"/>
        <end position="21"/>
    </location>
</feature>
<feature type="transmembrane region" description="Helical" evidence="2">
    <location>
        <begin position="33"/>
        <end position="53"/>
    </location>
</feature>
<feature type="transmembrane region" description="Helical" evidence="2">
    <location>
        <begin position="78"/>
        <end position="98"/>
    </location>
</feature>
<feature type="transmembrane region" description="Helical" evidence="2">
    <location>
        <begin position="118"/>
        <end position="138"/>
    </location>
</feature>
<feature type="transmembrane region" description="Helical" evidence="2">
    <location>
        <begin position="167"/>
        <end position="187"/>
    </location>
</feature>
<feature type="transmembrane region" description="Helical" evidence="2">
    <location>
        <begin position="207"/>
        <end position="227"/>
    </location>
</feature>
<feature type="transmembrane region" description="Helical" evidence="2">
    <location>
        <begin position="241"/>
        <end position="261"/>
    </location>
</feature>
<feature type="transmembrane region" description="Helical" evidence="2">
    <location>
        <begin position="273"/>
        <end position="293"/>
    </location>
</feature>
<feature type="transmembrane region" description="Helical" evidence="2">
    <location>
        <begin position="300"/>
        <end position="320"/>
    </location>
</feature>
<feature type="transmembrane region" description="Helical" evidence="2">
    <location>
        <begin position="331"/>
        <end position="351"/>
    </location>
</feature>
<feature type="transmembrane region" description="Helical" evidence="2">
    <location>
        <begin position="387"/>
        <end position="407"/>
    </location>
</feature>
<feature type="transmembrane region" description="Helical" evidence="2">
    <location>
        <begin position="424"/>
        <end position="444"/>
    </location>
</feature>
<feature type="transmembrane region" description="Helical" evidence="2">
    <location>
        <begin position="472"/>
        <end position="492"/>
    </location>
</feature>
<feature type="transmembrane region" description="Helical" evidence="2">
    <location>
        <begin position="527"/>
        <end position="547"/>
    </location>
</feature>
<feature type="transmembrane region" description="Helical" evidence="2">
    <location>
        <begin position="595"/>
        <end position="615"/>
    </location>
</feature>
<feature type="transmembrane region" description="Helical" evidence="2">
    <location>
        <begin position="627"/>
        <end position="647"/>
    </location>
</feature>
<feature type="transmembrane region" description="Helical" evidence="2">
    <location>
        <begin position="651"/>
        <end position="671"/>
    </location>
</feature>
<feature type="transmembrane region" description="Helical" evidence="2">
    <location>
        <begin position="676"/>
        <end position="696"/>
    </location>
</feature>
<feature type="transmembrane region" description="Helical" evidence="2">
    <location>
        <begin position="712"/>
        <end position="732"/>
    </location>
</feature>
<feature type="transmembrane region" description="Helical" evidence="2">
    <location>
        <begin position="768"/>
        <end position="788"/>
    </location>
</feature>
<keyword id="KW-0050">Antiport</keyword>
<keyword id="KW-1003">Cell membrane</keyword>
<keyword id="KW-0406">Ion transport</keyword>
<keyword id="KW-0472">Membrane</keyword>
<keyword id="KW-0812">Transmembrane</keyword>
<keyword id="KW-1133">Transmembrane helix</keyword>
<keyword id="KW-0813">Transport</keyword>
<gene>
    <name type="primary">mnhA2</name>
    <name type="synonym">mrpA2</name>
    <name type="ordered locus">SACOL0679</name>
</gene>
<organism>
    <name type="scientific">Staphylococcus aureus (strain COL)</name>
    <dbReference type="NCBI Taxonomy" id="93062"/>
    <lineage>
        <taxon>Bacteria</taxon>
        <taxon>Bacillati</taxon>
        <taxon>Bacillota</taxon>
        <taxon>Bacilli</taxon>
        <taxon>Bacillales</taxon>
        <taxon>Staphylococcaceae</taxon>
        <taxon>Staphylococcus</taxon>
    </lineage>
</organism>
<protein>
    <recommendedName>
        <fullName>Putative antiporter subunit mnhA2</fullName>
    </recommendedName>
    <alternativeName>
        <fullName>Mrp complex subunit A2</fullName>
    </alternativeName>
    <alternativeName>
        <fullName>Putative NADH-ubiquinone oxidoreductase subunit mnhA2</fullName>
    </alternativeName>
</protein>
<name>MNHA2_STAAC</name>
<dbReference type="EMBL" id="CP000046">
    <property type="protein sequence ID" value="AAW36367.1"/>
    <property type="molecule type" value="Genomic_DNA"/>
</dbReference>
<dbReference type="RefSeq" id="WP_000060776.1">
    <property type="nucleotide sequence ID" value="NZ_JBGOFO010000005.1"/>
</dbReference>
<dbReference type="SMR" id="Q5HI45"/>
<dbReference type="KEGG" id="sac:SACOL0679"/>
<dbReference type="HOGENOM" id="CLU_007100_2_1_9"/>
<dbReference type="Proteomes" id="UP000000530">
    <property type="component" value="Chromosome"/>
</dbReference>
<dbReference type="GO" id="GO:0005886">
    <property type="term" value="C:plasma membrane"/>
    <property type="evidence" value="ECO:0007669"/>
    <property type="project" value="UniProtKB-SubCell"/>
</dbReference>
<dbReference type="GO" id="GO:0015297">
    <property type="term" value="F:antiporter activity"/>
    <property type="evidence" value="ECO:0007669"/>
    <property type="project" value="UniProtKB-KW"/>
</dbReference>
<dbReference type="GO" id="GO:0006811">
    <property type="term" value="P:monoatomic ion transport"/>
    <property type="evidence" value="ECO:0007669"/>
    <property type="project" value="UniProtKB-KW"/>
</dbReference>
<dbReference type="InterPro" id="IPR050616">
    <property type="entry name" value="CPA3_Na-H_Antiporter_A"/>
</dbReference>
<dbReference type="InterPro" id="IPR025383">
    <property type="entry name" value="MrpA_C/MbhD"/>
</dbReference>
<dbReference type="InterPro" id="IPR046806">
    <property type="entry name" value="MrpA_C/MbhE"/>
</dbReference>
<dbReference type="InterPro" id="IPR001750">
    <property type="entry name" value="ND/Mrp_TM"/>
</dbReference>
<dbReference type="InterPro" id="IPR001516">
    <property type="entry name" value="Proton_antipo_N"/>
</dbReference>
<dbReference type="NCBIfam" id="NF009286">
    <property type="entry name" value="PRK12646.1"/>
    <property type="match status" value="1"/>
</dbReference>
<dbReference type="PANTHER" id="PTHR43373">
    <property type="entry name" value="NA(+)/H(+) ANTIPORTER SUBUNIT"/>
    <property type="match status" value="1"/>
</dbReference>
<dbReference type="PANTHER" id="PTHR43373:SF1">
    <property type="entry name" value="NA(+)_H(+) ANTIPORTER SUBUNIT A"/>
    <property type="match status" value="1"/>
</dbReference>
<dbReference type="Pfam" id="PF13244">
    <property type="entry name" value="MbhD"/>
    <property type="match status" value="1"/>
</dbReference>
<dbReference type="Pfam" id="PF20501">
    <property type="entry name" value="MbhE"/>
    <property type="match status" value="1"/>
</dbReference>
<dbReference type="Pfam" id="PF00361">
    <property type="entry name" value="Proton_antipo_M"/>
    <property type="match status" value="1"/>
</dbReference>
<dbReference type="Pfam" id="PF00662">
    <property type="entry name" value="Proton_antipo_N"/>
    <property type="match status" value="1"/>
</dbReference>
<dbReference type="PRINTS" id="PR01434">
    <property type="entry name" value="NADHDHGNASE5"/>
</dbReference>
<sequence length="800" mass="89687">MSLVYLLIAILVIMAMILLMSKRRALAKYAGYIALVAPVISSIYFLIQIPSVAKLQYLSTSIPWIKTLDINLDLRLDGLSLMFSLIISLIGIAVFFYATQYLSSRKDNLPRFYFYLTLFMFSMIGIVLSDNTILMYIFWELTSVSSFLLISYWYNNGDSQFGAIQSFMITVFGGLALLVGFIMLYIMTGTNNITEILGQADHIKNHGLFIPMIFMFLLGAFTKSAQFPFHIWLPRAMAAPTPVSAYLHSATMVKAGIFLLLRFTPLLGLSNMYVYIVTFVGLITMLFGSITALKQWDLKGILAYSTISQLGMIMAMVGIGGGYAQHQQDAIASIYVFVLFGALFHLMNHAIFKCALFMGVGILDHEAGSRDIRILSGMRQLFPKMNLVMTIAALSMAGVPFLNGFLSKEMFLDALTQTGQLSQFSLISMIAIVFVGVIASVFTFTYALYMVKEVFWTKYDSKVFTKKNIHEPWLFSLPSLILMVLVPVIFFVPNIFGKGIIVLALRAVSGGNHQIDQLAPHVSQWHGFNIPLLLTIIIILLGSVLAIKVDWKKVFTGKIRQISVSKSYEMVYRHFEKFATKRFKRVMQDRLNQYIIMTLGIFMIIIGYGYIRIGLPKVHQLHVSEFGALEIILAIVTVTIGISLIFIRQRLTMVILNGVIGFVVTLFFIAMKAPDLALTQLVVETITTILFIVSFSRLPNVPRSNANKKREIIKISVSLLMALIVVSLIFITQQTDGLSSISDFYLKADKLTGGKNIVNAILGDFRALDTLFEGLVLIITGLGIYTLLNYQDRRGQDERE</sequence>
<evidence type="ECO:0000250" key="1"/>
<evidence type="ECO:0000255" key="2"/>
<evidence type="ECO:0000305" key="3"/>
<proteinExistence type="inferred from homology"/>
<comment type="subunit">
    <text evidence="1">May form a heterooligomeric complex that consists of seven subunits: mnhA2, mnhB2, mnhC2, mnhD2, mnhE2, mnhF2 and mnhG2.</text>
</comment>
<comment type="subcellular location">
    <subcellularLocation>
        <location evidence="3">Cell membrane</location>
        <topology evidence="3">Multi-pass membrane protein</topology>
    </subcellularLocation>
</comment>
<comment type="similarity">
    <text evidence="3">Belongs to the CPA3 antiporters (TC 2.A.63) subunit A family.</text>
</comment>
<accession>Q5HI45</accession>
<reference key="1">
    <citation type="journal article" date="2005" name="J. Bacteriol.">
        <title>Insights on evolution of virulence and resistance from the complete genome analysis of an early methicillin-resistant Staphylococcus aureus strain and a biofilm-producing methicillin-resistant Staphylococcus epidermidis strain.</title>
        <authorList>
            <person name="Gill S.R."/>
            <person name="Fouts D.E."/>
            <person name="Archer G.L."/>
            <person name="Mongodin E.F."/>
            <person name="DeBoy R.T."/>
            <person name="Ravel J."/>
            <person name="Paulsen I.T."/>
            <person name="Kolonay J.F."/>
            <person name="Brinkac L.M."/>
            <person name="Beanan M.J."/>
            <person name="Dodson R.J."/>
            <person name="Daugherty S.C."/>
            <person name="Madupu R."/>
            <person name="Angiuoli S.V."/>
            <person name="Durkin A.S."/>
            <person name="Haft D.H."/>
            <person name="Vamathevan J.J."/>
            <person name="Khouri H."/>
            <person name="Utterback T.R."/>
            <person name="Lee C."/>
            <person name="Dimitrov G."/>
            <person name="Jiang L."/>
            <person name="Qin H."/>
            <person name="Weidman J."/>
            <person name="Tran K."/>
            <person name="Kang K.H."/>
            <person name="Hance I.R."/>
            <person name="Nelson K.E."/>
            <person name="Fraser C.M."/>
        </authorList>
    </citation>
    <scope>NUCLEOTIDE SEQUENCE [LARGE SCALE GENOMIC DNA]</scope>
    <source>
        <strain>COL</strain>
    </source>
</reference>